<protein>
    <recommendedName>
        <fullName evidence="2">Small ribosomal subunit protein uS2</fullName>
    </recommendedName>
    <alternativeName>
        <fullName>30S ribosomal protein S2</fullName>
    </alternativeName>
</protein>
<reference key="1">
    <citation type="journal article" date="2001" name="Proc. Natl. Acad. Sci. U.S.A.">
        <title>Complete genome sequence of an M1 strain of Streptococcus pyogenes.</title>
        <authorList>
            <person name="Ferretti J.J."/>
            <person name="McShan W.M."/>
            <person name="Ajdic D.J."/>
            <person name="Savic D.J."/>
            <person name="Savic G."/>
            <person name="Lyon K."/>
            <person name="Primeaux C."/>
            <person name="Sezate S."/>
            <person name="Suvorov A.N."/>
            <person name="Kenton S."/>
            <person name="Lai H.S."/>
            <person name="Lin S.P."/>
            <person name="Qian Y."/>
            <person name="Jia H.G."/>
            <person name="Najar F.Z."/>
            <person name="Ren Q."/>
            <person name="Zhu H."/>
            <person name="Song L."/>
            <person name="White J."/>
            <person name="Yuan X."/>
            <person name="Clifton S.W."/>
            <person name="Roe B.A."/>
            <person name="McLaughlin R.E."/>
        </authorList>
    </citation>
    <scope>NUCLEOTIDE SEQUENCE [LARGE SCALE GENOMIC DNA]</scope>
    <source>
        <strain>ATCC 700294 / SF370 / Serotype M1</strain>
    </source>
</reference>
<reference key="2">
    <citation type="journal article" date="2005" name="J. Infect. Dis.">
        <title>Evolutionary origin and emergence of a highly successful clone of serotype M1 group A Streptococcus involved multiple horizontal gene transfer events.</title>
        <authorList>
            <person name="Sumby P."/>
            <person name="Porcella S.F."/>
            <person name="Madrigal A.G."/>
            <person name="Barbian K.D."/>
            <person name="Virtaneva K."/>
            <person name="Ricklefs S.M."/>
            <person name="Sturdevant D.E."/>
            <person name="Graham M.R."/>
            <person name="Vuopio-Varkila J."/>
            <person name="Hoe N.P."/>
            <person name="Musser J.M."/>
        </authorList>
    </citation>
    <scope>NUCLEOTIDE SEQUENCE [LARGE SCALE GENOMIC DNA]</scope>
    <source>
        <strain>ATCC BAA-947 / MGAS5005 / Serotype M1</strain>
    </source>
</reference>
<evidence type="ECO:0000250" key="1"/>
<evidence type="ECO:0000305" key="2"/>
<name>RS2_STRP1</name>
<organism>
    <name type="scientific">Streptococcus pyogenes serotype M1</name>
    <dbReference type="NCBI Taxonomy" id="301447"/>
    <lineage>
        <taxon>Bacteria</taxon>
        <taxon>Bacillati</taxon>
        <taxon>Bacillota</taxon>
        <taxon>Bacilli</taxon>
        <taxon>Lactobacillales</taxon>
        <taxon>Streptococcaceae</taxon>
        <taxon>Streptococcus</taxon>
    </lineage>
</organism>
<gene>
    <name type="primary">rpsB</name>
    <name type="ordered locus">SPy_2092</name>
    <name type="ordered locus">M5005_Spy1780</name>
</gene>
<dbReference type="EMBL" id="AE004092">
    <property type="protein sequence ID" value="AAK34744.1"/>
    <property type="molecule type" value="Genomic_DNA"/>
</dbReference>
<dbReference type="EMBL" id="CP000017">
    <property type="protein sequence ID" value="AAZ52398.1"/>
    <property type="molecule type" value="Genomic_DNA"/>
</dbReference>
<dbReference type="RefSeq" id="NP_270023.1">
    <property type="nucleotide sequence ID" value="NC_002737.2"/>
</dbReference>
<dbReference type="SMR" id="P68901"/>
<dbReference type="PaxDb" id="1314-HKU360_01893"/>
<dbReference type="KEGG" id="spy:SPy_2092"/>
<dbReference type="KEGG" id="spz:M5005_Spy1780"/>
<dbReference type="PATRIC" id="fig|160490.10.peg.1813"/>
<dbReference type="HOGENOM" id="CLU_040318_1_2_9"/>
<dbReference type="OMA" id="PYIFMEK"/>
<dbReference type="PRO" id="PR:P68901"/>
<dbReference type="Proteomes" id="UP000000750">
    <property type="component" value="Chromosome"/>
</dbReference>
<dbReference type="GO" id="GO:0022627">
    <property type="term" value="C:cytosolic small ribosomal subunit"/>
    <property type="evidence" value="ECO:0007669"/>
    <property type="project" value="TreeGrafter"/>
</dbReference>
<dbReference type="GO" id="GO:0003735">
    <property type="term" value="F:structural constituent of ribosome"/>
    <property type="evidence" value="ECO:0007669"/>
    <property type="project" value="InterPro"/>
</dbReference>
<dbReference type="GO" id="GO:0006412">
    <property type="term" value="P:translation"/>
    <property type="evidence" value="ECO:0007669"/>
    <property type="project" value="UniProtKB-UniRule"/>
</dbReference>
<dbReference type="CDD" id="cd01425">
    <property type="entry name" value="RPS2"/>
    <property type="match status" value="1"/>
</dbReference>
<dbReference type="FunFam" id="1.10.287.610:FF:000001">
    <property type="entry name" value="30S ribosomal protein S2"/>
    <property type="match status" value="1"/>
</dbReference>
<dbReference type="Gene3D" id="3.40.50.10490">
    <property type="entry name" value="Glucose-6-phosphate isomerase like protein, domain 1"/>
    <property type="match status" value="1"/>
</dbReference>
<dbReference type="Gene3D" id="1.10.287.610">
    <property type="entry name" value="Helix hairpin bin"/>
    <property type="match status" value="1"/>
</dbReference>
<dbReference type="HAMAP" id="MF_00291_B">
    <property type="entry name" value="Ribosomal_uS2_B"/>
    <property type="match status" value="1"/>
</dbReference>
<dbReference type="InterPro" id="IPR001865">
    <property type="entry name" value="Ribosomal_uS2"/>
</dbReference>
<dbReference type="InterPro" id="IPR005706">
    <property type="entry name" value="Ribosomal_uS2_bac/mit/plastid"/>
</dbReference>
<dbReference type="InterPro" id="IPR018130">
    <property type="entry name" value="Ribosomal_uS2_CS"/>
</dbReference>
<dbReference type="InterPro" id="IPR023591">
    <property type="entry name" value="Ribosomal_uS2_flav_dom_sf"/>
</dbReference>
<dbReference type="NCBIfam" id="TIGR01011">
    <property type="entry name" value="rpsB_bact"/>
    <property type="match status" value="1"/>
</dbReference>
<dbReference type="PANTHER" id="PTHR12534">
    <property type="entry name" value="30S RIBOSOMAL PROTEIN S2 PROKARYOTIC AND ORGANELLAR"/>
    <property type="match status" value="1"/>
</dbReference>
<dbReference type="PANTHER" id="PTHR12534:SF0">
    <property type="entry name" value="SMALL RIBOSOMAL SUBUNIT PROTEIN US2M"/>
    <property type="match status" value="1"/>
</dbReference>
<dbReference type="Pfam" id="PF00318">
    <property type="entry name" value="Ribosomal_S2"/>
    <property type="match status" value="1"/>
</dbReference>
<dbReference type="PRINTS" id="PR00395">
    <property type="entry name" value="RIBOSOMALS2"/>
</dbReference>
<dbReference type="SUPFAM" id="SSF52313">
    <property type="entry name" value="Ribosomal protein S2"/>
    <property type="match status" value="1"/>
</dbReference>
<dbReference type="PROSITE" id="PS00962">
    <property type="entry name" value="RIBOSOMAL_S2_1"/>
    <property type="match status" value="1"/>
</dbReference>
<sequence length="255" mass="28400">MAVISMKQLLEAGVHFGHQTRRWNPKMAKYIFTERNGIHVIDLQQTVKLADQAYEFVRDAAANDAVILFVGTKKQAAEAVADEATRAGQYFINHRWLGGTLTNWGTIQKRIARLKEIKRMEEEGTFDVLPKKEVALLNKQRARLEKFLGGIEDMPRIPDVMYVVDPHKEQIAVKEAKKLGIPVVAMVDTNADPDDIDIIIPANDDAIRAVKLITAKLADAIIEGRQGEDADVAFEADTQADSIEEIVEVVEGDNA</sequence>
<comment type="similarity">
    <text evidence="2">Belongs to the universal ribosomal protein uS2 family.</text>
</comment>
<feature type="initiator methionine" description="Removed" evidence="1">
    <location>
        <position position="1"/>
    </location>
</feature>
<feature type="chain" id="PRO_0000134253" description="Small ribosomal subunit protein uS2">
    <location>
        <begin position="2"/>
        <end position="255"/>
    </location>
</feature>
<keyword id="KW-1185">Reference proteome</keyword>
<keyword id="KW-0687">Ribonucleoprotein</keyword>
<keyword id="KW-0689">Ribosomal protein</keyword>
<proteinExistence type="inferred from homology"/>
<accession>P68901</accession>
<accession>P82483</accession>
<accession>Q48W77</accession>